<reference key="1">
    <citation type="journal article" date="1988" name="DNA">
        <title>Organization and nucleotide sequence of two chromosomal genes for rat cytochrome c oxidase subunit VIc: a structural and a processed gene.</title>
        <authorList>
            <person name="Suske G."/>
            <person name="Enders C."/>
            <person name="Schlerf A."/>
            <person name="Kadenbach B."/>
        </authorList>
    </citation>
    <scope>NUCLEOTIDE SEQUENCE [MRNA]</scope>
</reference>
<reference key="2">
    <citation type="journal article" date="1995" name="Eur. J. Biochem.">
        <title>Cytochrome-c oxidase in developing rat heart. Enzymic properties and amino-terminal sequences suggest identity of the fetal heart and the adult liver isoform.</title>
        <authorList>
            <person name="Schaegger H."/>
            <person name="Noack H."/>
            <person name="Halangk W."/>
            <person name="Brandt U."/>
            <person name="von Jagow G."/>
        </authorList>
    </citation>
    <scope>PROTEIN SEQUENCE OF 2-11</scope>
    <source>
        <strain>Wistar</strain>
        <tissue>Liver</tissue>
    </source>
</reference>
<protein>
    <recommendedName>
        <fullName>Cytochrome c oxidase subunit 6C-1</fullName>
    </recommendedName>
    <alternativeName>
        <fullName>Cytochrome c oxidase polypeptide VIc-1</fullName>
    </alternativeName>
</protein>
<keyword id="KW-0903">Direct protein sequencing</keyword>
<keyword id="KW-0472">Membrane</keyword>
<keyword id="KW-0496">Mitochondrion</keyword>
<keyword id="KW-0999">Mitochondrion inner membrane</keyword>
<keyword id="KW-1185">Reference proteome</keyword>
<keyword id="KW-0812">Transmembrane</keyword>
<keyword id="KW-1133">Transmembrane helix</keyword>
<comment type="function">
    <text evidence="1">Component of the cytochrome c oxidase, the last enzyme in the mitochondrial electron transport chain which drives oxidative phosphorylation. The respiratory chain contains 3 multisubunit complexes succinate dehydrogenase (complex II, CII), ubiquinol-cytochrome c oxidoreductase (cytochrome b-c1 complex, complex III, CIII) and cytochrome c oxidase (complex IV, CIV), that cooperate to transfer electrons derived from NADH and succinate to molecular oxygen, creating an electrochemical gradient over the inner membrane that drives transmembrane transport and the ATP synthase. Cytochrome c oxidase is the component of the respiratory chain that catalyzes the reduction of oxygen to water. Electrons originating from reduced cytochrome c in the intermembrane space (IMS) are transferred via the dinuclear copper A center (CU(A)) of subunit 2 and heme A of subunit 1 to the active site in subunit 1, a binuclear center (BNC) formed by heme A3 and copper B (CU(B)). The BNC reduces molecular oxygen to 2 water molecules using 4 electrons from cytochrome c in the IMS and 4 protons from the mitochondrial matrix.</text>
</comment>
<comment type="pathway">
    <text evidence="1">Energy metabolism; oxidative phosphorylation.</text>
</comment>
<comment type="subunit">
    <text evidence="1">Component of the cytochrome c oxidase (complex IV, CIV), a multisubunit enzyme composed of 14 subunits. The complex is composed of a catalytic core of 3 subunits MT-CO1, MT-CO2 and MT-CO3, encoded in the mitochondrial DNA, and 11 supernumerary subunits COX4I, COX5A, COX5B, COX6A, COX6B, COX6C, COX7A, COX7B, COX7C, COX8 and NDUFA4, which are encoded in the nuclear genome. The complex exists as a monomer or a dimer and forms supercomplexes (SCs) in the inner mitochondrial membrane with NADH-ubiquinone oxidoreductase (complex I, CI) and ubiquinol-cytochrome c oxidoreductase (cytochrome b-c1 complex, complex III, CIII), resulting in different assemblies (supercomplex SCI(1)III(2)IV(1) and megacomplex MCI(2)III(2)IV(2)).</text>
</comment>
<comment type="subcellular location">
    <subcellularLocation>
        <location evidence="1">Mitochondrion inner membrane</location>
        <topology evidence="1">Single-pass membrane protein</topology>
    </subcellularLocation>
</comment>
<comment type="similarity">
    <text evidence="3">Belongs to the cytochrome c oxidase subunit 6c family.</text>
</comment>
<evidence type="ECO:0000250" key="1">
    <source>
        <dbReference type="UniProtKB" id="P04038"/>
    </source>
</evidence>
<evidence type="ECO:0000269" key="2">
    <source>
    </source>
</evidence>
<evidence type="ECO:0000305" key="3"/>
<name>CX6C1_RAT</name>
<accession>P11950</accession>
<dbReference type="EMBL" id="M20183">
    <property type="protein sequence ID" value="AAA41012.1"/>
    <property type="molecule type" value="mRNA"/>
</dbReference>
<dbReference type="PIR" id="B29907">
    <property type="entry name" value="B29907"/>
</dbReference>
<dbReference type="SMR" id="P11950"/>
<dbReference type="CORUM" id="P11950"/>
<dbReference type="FunCoup" id="P11950">
    <property type="interactions" value="322"/>
</dbReference>
<dbReference type="STRING" id="10116.ENSRNOP00000069985"/>
<dbReference type="Ensembl" id="ENSRNOT00000043529.3">
    <property type="protein sequence ID" value="ENSRNOP00000069985.1"/>
    <property type="gene ID" value="ENSRNOG00000032602.3"/>
</dbReference>
<dbReference type="UCSC" id="RGD:735056">
    <property type="organism name" value="rat"/>
</dbReference>
<dbReference type="AGR" id="RGD:735056"/>
<dbReference type="RGD" id="735056">
    <property type="gene designation" value="Cox6c1"/>
</dbReference>
<dbReference type="GeneTree" id="ENSGT00940000163089"/>
<dbReference type="HOGENOM" id="CLU_196254_0_0_1"/>
<dbReference type="InParanoid" id="P11950"/>
<dbReference type="OMA" id="CKFAVAK"/>
<dbReference type="PhylomeDB" id="P11950"/>
<dbReference type="UniPathway" id="UPA00705"/>
<dbReference type="PRO" id="PR:P11950"/>
<dbReference type="Proteomes" id="UP000002494">
    <property type="component" value="Chromosome 19"/>
</dbReference>
<dbReference type="Bgee" id="ENSRNOG00000032602">
    <property type="expression patterns" value="Expressed in heart"/>
</dbReference>
<dbReference type="GO" id="GO:0005743">
    <property type="term" value="C:mitochondrial inner membrane"/>
    <property type="evidence" value="ECO:0000318"/>
    <property type="project" value="GO_Central"/>
</dbReference>
<dbReference type="GO" id="GO:0006119">
    <property type="term" value="P:oxidative phosphorylation"/>
    <property type="evidence" value="ECO:0007669"/>
    <property type="project" value="UniProtKB-UniPathway"/>
</dbReference>
<dbReference type="CDD" id="cd22901">
    <property type="entry name" value="CcO_VIc"/>
    <property type="match status" value="1"/>
</dbReference>
<dbReference type="Gene3D" id="4.10.93.10">
    <property type="entry name" value="Mitochondrial cytochrome c oxidase subunit VIc/VIIs"/>
    <property type="match status" value="1"/>
</dbReference>
<dbReference type="InterPro" id="IPR051389">
    <property type="entry name" value="Cytochrome_c_oxidase_VIc"/>
</dbReference>
<dbReference type="InterPro" id="IPR034884">
    <property type="entry name" value="Cytochrome_c_oxidase_VIc/VIIs"/>
</dbReference>
<dbReference type="InterPro" id="IPR037169">
    <property type="entry name" value="Cytochrome_c_oxidase_VIc_sf"/>
</dbReference>
<dbReference type="PANTHER" id="PTHR48416">
    <property type="entry name" value="CYTOCHROME C OXIDASE SUBUNIT 6C"/>
    <property type="match status" value="1"/>
</dbReference>
<dbReference type="PANTHER" id="PTHR48416:SF1">
    <property type="entry name" value="CYTOCHROME C OXIDASE SUBUNIT 6C"/>
    <property type="match status" value="1"/>
</dbReference>
<dbReference type="Pfam" id="PF02937">
    <property type="entry name" value="COX6C"/>
    <property type="match status" value="1"/>
</dbReference>
<dbReference type="SUPFAM" id="SSF81415">
    <property type="entry name" value="Mitochondrial cytochrome c oxidase subunit VIc"/>
    <property type="match status" value="1"/>
</dbReference>
<feature type="initiator methionine" description="Removed" evidence="2">
    <location>
        <position position="1"/>
    </location>
</feature>
<feature type="chain" id="PRO_0000191303" description="Cytochrome c oxidase subunit 6C-1">
    <location>
        <begin position="2"/>
        <end position="76"/>
    </location>
</feature>
<feature type="topological domain" description="Mitochondrial matrix" evidence="1">
    <location>
        <begin position="4"/>
        <end position="14"/>
    </location>
</feature>
<feature type="transmembrane region" description="Helical" evidence="1">
    <location>
        <begin position="15"/>
        <end position="55"/>
    </location>
</feature>
<feature type="topological domain" description="Mitochondrial intermembrane" evidence="1">
    <location>
        <begin position="56"/>
        <end position="76"/>
    </location>
</feature>
<gene>
    <name type="primary">Cox6c1</name>
</gene>
<sequence>MSSGALLPKPQMHDPLSKRLWVHIVGAFIVDLGVAAAHKFGAAKPRKKAYADFYRNHDPMKDFDEMRKAGVFRSVK</sequence>
<organism>
    <name type="scientific">Rattus norvegicus</name>
    <name type="common">Rat</name>
    <dbReference type="NCBI Taxonomy" id="10116"/>
    <lineage>
        <taxon>Eukaryota</taxon>
        <taxon>Metazoa</taxon>
        <taxon>Chordata</taxon>
        <taxon>Craniata</taxon>
        <taxon>Vertebrata</taxon>
        <taxon>Euteleostomi</taxon>
        <taxon>Mammalia</taxon>
        <taxon>Eutheria</taxon>
        <taxon>Euarchontoglires</taxon>
        <taxon>Glires</taxon>
        <taxon>Rodentia</taxon>
        <taxon>Myomorpha</taxon>
        <taxon>Muroidea</taxon>
        <taxon>Muridae</taxon>
        <taxon>Murinae</taxon>
        <taxon>Rattus</taxon>
    </lineage>
</organism>
<proteinExistence type="evidence at protein level"/>